<accession>A0A0H2URA3</accession>
<reference key="1">
    <citation type="journal article" date="2001" name="Science">
        <title>Complete genome sequence of a virulent isolate of Streptococcus pneumoniae.</title>
        <authorList>
            <person name="Tettelin H."/>
            <person name="Nelson K.E."/>
            <person name="Paulsen I.T."/>
            <person name="Eisen J.A."/>
            <person name="Read T.D."/>
            <person name="Peterson S.N."/>
            <person name="Heidelberg J.F."/>
            <person name="DeBoy R.T."/>
            <person name="Haft D.H."/>
            <person name="Dodson R.J."/>
            <person name="Durkin A.S."/>
            <person name="Gwinn M.L."/>
            <person name="Kolonay J.F."/>
            <person name="Nelson W.C."/>
            <person name="Peterson J.D."/>
            <person name="Umayam L.A."/>
            <person name="White O."/>
            <person name="Salzberg S.L."/>
            <person name="Lewis M.R."/>
            <person name="Radune D."/>
            <person name="Holtzapple E.K."/>
            <person name="Khouri H.M."/>
            <person name="Wolf A.M."/>
            <person name="Utterback T.R."/>
            <person name="Hansen C.L."/>
            <person name="McDonald L.A."/>
            <person name="Feldblyum T.V."/>
            <person name="Angiuoli S.V."/>
            <person name="Dickinson T."/>
            <person name="Hickey E.K."/>
            <person name="Holt I.E."/>
            <person name="Loftus B.J."/>
            <person name="Yang F."/>
            <person name="Smith H.O."/>
            <person name="Venter J.C."/>
            <person name="Dougherty B.A."/>
            <person name="Morrison D.A."/>
            <person name="Hollingshead S.K."/>
            <person name="Fraser C.M."/>
        </authorList>
    </citation>
    <scope>NUCLEOTIDE SEQUENCE [LARGE SCALE GENOMIC DNA]</scope>
    <source>
        <strain>ATCC BAA-334 / TIGR4</strain>
    </source>
</reference>
<reference key="2">
    <citation type="journal article" date="2006" name="Infect. Immun.">
        <title>Identification of a candidate Streptococcus pneumoniae core genome and regions of diversity correlated with invasive pneumococcal disease.</title>
        <authorList>
            <person name="Obert C."/>
            <person name="Sublett J."/>
            <person name="Kaushal D."/>
            <person name="Hinojosa E."/>
            <person name="Barton T."/>
            <person name="Tuomanen E.I."/>
            <person name="Orihuela C.J."/>
        </authorList>
    </citation>
    <scope>DISCUSSION OF SEQUENCE</scope>
    <source>
        <strain>ATCC BAA-334 / TIGR4</strain>
    </source>
</reference>
<reference key="3">
    <citation type="journal article" date="2017" name="J. Biol. Chem.">
        <title>Defining the enzymatic pathway for polymorphic O-glycosylation of the pneumococcal serine-rich repeat protein PsrP.</title>
        <authorList>
            <person name="Jiang Y.L."/>
            <person name="Jin H."/>
            <person name="Yang H.B."/>
            <person name="Zhao R.L."/>
            <person name="Wang S."/>
            <person name="Chen Y."/>
            <person name="Zhou C.Z."/>
        </authorList>
    </citation>
    <scope>FUNCTION</scope>
    <scope>DOMAIN</scope>
    <source>
        <strain>ATCC BAA-334 / TIGR4</strain>
    </source>
</reference>
<protein>
    <recommendedName>
        <fullName evidence="5">Glycosyltransferase GlyB</fullName>
    </recommendedName>
    <alternativeName>
        <fullName evidence="6">Putative PsrP glycosyltransferase GlyB</fullName>
    </alternativeName>
</protein>
<proteinExistence type="inferred from homology"/>
<comment type="function">
    <text evidence="2">May be involved in the polymorphic O-glycosylation of the serine-rich repeat protein PsrP. Has equal hydrolytic activity against both UDP-galactose and UDP-glucose; no glycosyltransferase activity has been seen with tested substrates.</text>
</comment>
<comment type="miscellaneous">
    <text evidence="3 4 6">Encoded in RD10, a pathogenicity island with an atypical GC content that is associated with invasive pneumococcal disease. Pathogenicity islands account for greater than half the genomic diversity observed between isolates (PubMed:11463916, PubMed:16861665). The main function of this island seems to be correct synthesis and export of pneumococcal serine-rich repeat protein PsrP (Probable).</text>
</comment>
<comment type="similarity">
    <text evidence="6">In the N-terminal section; belongs to the glycosyltransferase 8 family.</text>
</comment>
<feature type="chain" id="PRO_0000447026" description="Glycosyltransferase GlyB">
    <location>
        <begin position="1"/>
        <end position="404"/>
    </location>
</feature>
<feature type="region of interest" description="GT8 domain" evidence="7">
    <location>
        <begin position="1"/>
        <end position="267"/>
    </location>
</feature>
<feature type="binding site" evidence="1">
    <location>
        <begin position="9"/>
        <end position="14"/>
    </location>
    <ligand>
        <name>UDP</name>
        <dbReference type="ChEBI" id="CHEBI:58223"/>
    </ligand>
</feature>
<feature type="binding site" evidence="1">
    <location>
        <begin position="103"/>
        <end position="104"/>
    </location>
    <ligand>
        <name>UDP</name>
        <dbReference type="ChEBI" id="CHEBI:58223"/>
    </ligand>
</feature>
<feature type="binding site" evidence="1">
    <location>
        <position position="103"/>
    </location>
    <ligand>
        <name>Mn(2+)</name>
        <dbReference type="ChEBI" id="CHEBI:29035"/>
    </ligand>
</feature>
<feature type="binding site" evidence="1">
    <location>
        <position position="105"/>
    </location>
    <ligand>
        <name>Mn(2+)</name>
        <dbReference type="ChEBI" id="CHEBI:29035"/>
    </ligand>
</feature>
<feature type="binding site" evidence="1">
    <location>
        <begin position="228"/>
        <end position="233"/>
    </location>
    <ligand>
        <name>UDP</name>
        <dbReference type="ChEBI" id="CHEBI:58223"/>
    </ligand>
</feature>
<feature type="binding site" evidence="1">
    <location>
        <position position="228"/>
    </location>
    <ligand>
        <name>Mn(2+)</name>
        <dbReference type="ChEBI" id="CHEBI:29035"/>
    </ligand>
</feature>
<dbReference type="EMBL" id="AE005672">
    <property type="protein sequence ID" value="AAK75844.1"/>
    <property type="molecule type" value="Genomic_DNA"/>
</dbReference>
<dbReference type="RefSeq" id="WP_001093470.1">
    <property type="nucleotide sequence ID" value="NZ_CP155539.1"/>
</dbReference>
<dbReference type="SMR" id="A0A0H2URA3"/>
<dbReference type="PaxDb" id="170187-SP_1770"/>
<dbReference type="EnsemblBacteria" id="AAK75844">
    <property type="protein sequence ID" value="AAK75844"/>
    <property type="gene ID" value="SP_1770"/>
</dbReference>
<dbReference type="KEGG" id="spn:SP_1770"/>
<dbReference type="eggNOG" id="COG1442">
    <property type="taxonomic scope" value="Bacteria"/>
</dbReference>
<dbReference type="PhylomeDB" id="A0A0H2URA3"/>
<dbReference type="BioCyc" id="SPNE170187:G1FZB-1796-MONOMER"/>
<dbReference type="Proteomes" id="UP000000585">
    <property type="component" value="Chromosome"/>
</dbReference>
<dbReference type="GO" id="GO:0016757">
    <property type="term" value="F:glycosyltransferase activity"/>
    <property type="evidence" value="ECO:0007669"/>
    <property type="project" value="UniProtKB-KW"/>
</dbReference>
<dbReference type="GO" id="GO:0046872">
    <property type="term" value="F:metal ion binding"/>
    <property type="evidence" value="ECO:0007669"/>
    <property type="project" value="UniProtKB-KW"/>
</dbReference>
<dbReference type="GO" id="GO:0000166">
    <property type="term" value="F:nucleotide binding"/>
    <property type="evidence" value="ECO:0007669"/>
    <property type="project" value="UniProtKB-KW"/>
</dbReference>
<dbReference type="CDD" id="cd04194">
    <property type="entry name" value="GT8_A4GalT_like"/>
    <property type="match status" value="1"/>
</dbReference>
<dbReference type="Gene3D" id="3.90.550.10">
    <property type="entry name" value="Spore Coat Polysaccharide Biosynthesis Protein SpsA, Chain A"/>
    <property type="match status" value="1"/>
</dbReference>
<dbReference type="InterPro" id="IPR002495">
    <property type="entry name" value="Glyco_trans_8"/>
</dbReference>
<dbReference type="InterPro" id="IPR050748">
    <property type="entry name" value="Glycosyltrans_8_dom-fam"/>
</dbReference>
<dbReference type="InterPro" id="IPR029044">
    <property type="entry name" value="Nucleotide-diphossugar_trans"/>
</dbReference>
<dbReference type="PANTHER" id="PTHR13778">
    <property type="entry name" value="GLYCOSYLTRANSFERASE 8 DOMAIN-CONTAINING PROTEIN"/>
    <property type="match status" value="1"/>
</dbReference>
<dbReference type="PANTHER" id="PTHR13778:SF47">
    <property type="entry name" value="LIPOPOLYSACCHARIDE 1,3-GALACTOSYLTRANSFERASE"/>
    <property type="match status" value="1"/>
</dbReference>
<dbReference type="Pfam" id="PF01501">
    <property type="entry name" value="Glyco_transf_8"/>
    <property type="match status" value="1"/>
</dbReference>
<dbReference type="SUPFAM" id="SSF53448">
    <property type="entry name" value="Nucleotide-diphospho-sugar transferases"/>
    <property type="match status" value="1"/>
</dbReference>
<keyword id="KW-0328">Glycosyltransferase</keyword>
<keyword id="KW-0464">Manganese</keyword>
<keyword id="KW-0479">Metal-binding</keyword>
<keyword id="KW-0547">Nucleotide-binding</keyword>
<keyword id="KW-1185">Reference proteome</keyword>
<keyword id="KW-0808">Transferase</keyword>
<sequence length="404" mass="47250">MNTKSIVFNADNDYVDKLETAIKSICCYNNCLKFYVFNDDIASEWFLMMNKRLKTIQSEIVNVKIVDHVLKKFHLPLKNLSYATFFRYFIPNFVKESRALYLDSDIIVTGSLDYLFDIELDGYALAAVEDSFGDVPSTNFNSGMLLVNVDTWRDEDACSKLLELTNQYHETAYGDQGILNMLFHDRWKRLDRNFNFMVGMDSVAHIEGNHKWYEISELKNGDLPSVIHYTGVKPWEIISNNRFREVWWFYNLLEWSDILLRKDIISRSFEELVYSPKAHTAIFTASCEMEHVEYLIENLPEVHFSILAHTYFASSVVALLRYSNVTIYPCFSPFDYRKILDNLDFYLDINHYKEVDNIVSVVQQLSKPIFTFENTSHDIGNQTNIFSSTEPNKMVEAIRQFIGE</sequence>
<evidence type="ECO:0000250" key="1">
    <source>
        <dbReference type="UniProtKB" id="A0A0H2URJ6"/>
    </source>
</evidence>
<evidence type="ECO:0000269" key="2">
    <source>
    </source>
</evidence>
<evidence type="ECO:0000303" key="3">
    <source>
    </source>
</evidence>
<evidence type="ECO:0000303" key="4">
    <source>
    </source>
</evidence>
<evidence type="ECO:0000303" key="5">
    <source>
    </source>
</evidence>
<evidence type="ECO:0000305" key="6"/>
<evidence type="ECO:0000305" key="7">
    <source>
    </source>
</evidence>
<gene>
    <name evidence="5" type="primary">glyB</name>
    <name type="ordered locus">SP_1770</name>
</gene>
<organism>
    <name type="scientific">Streptococcus pneumoniae serotype 4 (strain ATCC BAA-334 / TIGR4)</name>
    <dbReference type="NCBI Taxonomy" id="170187"/>
    <lineage>
        <taxon>Bacteria</taxon>
        <taxon>Bacillati</taxon>
        <taxon>Bacillota</taxon>
        <taxon>Bacilli</taxon>
        <taxon>Lactobacillales</taxon>
        <taxon>Streptococcaceae</taxon>
        <taxon>Streptococcus</taxon>
    </lineage>
</organism>
<name>GLYB_STRPN</name>